<reference key="1">
    <citation type="journal article" date="2003" name="Lancet">
        <title>Genome sequence of Vibrio parahaemolyticus: a pathogenic mechanism distinct from that of V. cholerae.</title>
        <authorList>
            <person name="Makino K."/>
            <person name="Oshima K."/>
            <person name="Kurokawa K."/>
            <person name="Yokoyama K."/>
            <person name="Uda T."/>
            <person name="Tagomori K."/>
            <person name="Iijima Y."/>
            <person name="Najima M."/>
            <person name="Nakano M."/>
            <person name="Yamashita A."/>
            <person name="Kubota Y."/>
            <person name="Kimura S."/>
            <person name="Yasunaga T."/>
            <person name="Honda T."/>
            <person name="Shinagawa H."/>
            <person name="Hattori M."/>
            <person name="Iida T."/>
        </authorList>
    </citation>
    <scope>NUCLEOTIDE SEQUENCE [LARGE SCALE GENOMIC DNA]</scope>
    <source>
        <strain>RIMD 2210633</strain>
    </source>
</reference>
<gene>
    <name evidence="1" type="primary">nqrB</name>
    <name type="ordered locus">VP2350</name>
</gene>
<dbReference type="EC" id="7.2.1.1" evidence="1"/>
<dbReference type="EMBL" id="BA000031">
    <property type="protein sequence ID" value="BAC60613.1"/>
    <property type="molecule type" value="Genomic_DNA"/>
</dbReference>
<dbReference type="RefSeq" id="NP_798729.1">
    <property type="nucleotide sequence ID" value="NC_004603.1"/>
</dbReference>
<dbReference type="RefSeq" id="WP_005456580.1">
    <property type="nucleotide sequence ID" value="NC_004603.1"/>
</dbReference>
<dbReference type="SMR" id="Q87MA7"/>
<dbReference type="GeneID" id="1189863"/>
<dbReference type="KEGG" id="vpa:VP2350"/>
<dbReference type="PATRIC" id="fig|223926.6.peg.2253"/>
<dbReference type="eggNOG" id="COG1805">
    <property type="taxonomic scope" value="Bacteria"/>
</dbReference>
<dbReference type="HOGENOM" id="CLU_042020_1_1_6"/>
<dbReference type="Proteomes" id="UP000002493">
    <property type="component" value="Chromosome 1"/>
</dbReference>
<dbReference type="GO" id="GO:0005886">
    <property type="term" value="C:plasma membrane"/>
    <property type="evidence" value="ECO:0007669"/>
    <property type="project" value="UniProtKB-SubCell"/>
</dbReference>
<dbReference type="GO" id="GO:0010181">
    <property type="term" value="F:FMN binding"/>
    <property type="evidence" value="ECO:0007669"/>
    <property type="project" value="InterPro"/>
</dbReference>
<dbReference type="GO" id="GO:0016655">
    <property type="term" value="F:oxidoreductase activity, acting on NAD(P)H, quinone or similar compound as acceptor"/>
    <property type="evidence" value="ECO:0007669"/>
    <property type="project" value="UniProtKB-UniRule"/>
</dbReference>
<dbReference type="GO" id="GO:0022904">
    <property type="term" value="P:respiratory electron transport chain"/>
    <property type="evidence" value="ECO:0007669"/>
    <property type="project" value="InterPro"/>
</dbReference>
<dbReference type="GO" id="GO:0006814">
    <property type="term" value="P:sodium ion transport"/>
    <property type="evidence" value="ECO:0007669"/>
    <property type="project" value="UniProtKB-UniRule"/>
</dbReference>
<dbReference type="GO" id="GO:0055085">
    <property type="term" value="P:transmembrane transport"/>
    <property type="evidence" value="ECO:0007669"/>
    <property type="project" value="InterPro"/>
</dbReference>
<dbReference type="HAMAP" id="MF_00426">
    <property type="entry name" value="NqrB"/>
    <property type="match status" value="1"/>
</dbReference>
<dbReference type="InterPro" id="IPR010966">
    <property type="entry name" value="NqrB"/>
</dbReference>
<dbReference type="InterPro" id="IPR004338">
    <property type="entry name" value="NqrB/RnfD"/>
</dbReference>
<dbReference type="NCBIfam" id="TIGR01937">
    <property type="entry name" value="nqrB"/>
    <property type="match status" value="1"/>
</dbReference>
<dbReference type="NCBIfam" id="NF003756">
    <property type="entry name" value="PRK05349.1"/>
    <property type="match status" value="1"/>
</dbReference>
<dbReference type="PANTHER" id="PTHR30578">
    <property type="entry name" value="ELECTRON TRANSPORT COMPLEX PROTEIN RNFD"/>
    <property type="match status" value="1"/>
</dbReference>
<dbReference type="PANTHER" id="PTHR30578:SF1">
    <property type="entry name" value="NA(+)-TRANSLOCATING NADH-QUINONE REDUCTASE SUBUNIT B"/>
    <property type="match status" value="1"/>
</dbReference>
<dbReference type="Pfam" id="PF03116">
    <property type="entry name" value="NQR2_RnfD_RnfE"/>
    <property type="match status" value="1"/>
</dbReference>
<dbReference type="PIRSF" id="PIRSF016055">
    <property type="entry name" value="NADH-UbQ_OxRdtase_B_su"/>
    <property type="match status" value="1"/>
</dbReference>
<keyword id="KW-0997">Cell inner membrane</keyword>
<keyword id="KW-1003">Cell membrane</keyword>
<keyword id="KW-0285">Flavoprotein</keyword>
<keyword id="KW-0288">FMN</keyword>
<keyword id="KW-0406">Ion transport</keyword>
<keyword id="KW-0472">Membrane</keyword>
<keyword id="KW-0520">NAD</keyword>
<keyword id="KW-0597">Phosphoprotein</keyword>
<keyword id="KW-0915">Sodium</keyword>
<keyword id="KW-0739">Sodium transport</keyword>
<keyword id="KW-1278">Translocase</keyword>
<keyword id="KW-0812">Transmembrane</keyword>
<keyword id="KW-1133">Transmembrane helix</keyword>
<keyword id="KW-0813">Transport</keyword>
<keyword id="KW-0830">Ubiquinone</keyword>
<protein>
    <recommendedName>
        <fullName evidence="1">Na(+)-translocating NADH-quinone reductase subunit B</fullName>
        <shortName evidence="1">Na(+)-NQR subunit B</shortName>
        <shortName evidence="1">Na(+)-translocating NQR subunit B</shortName>
        <ecNumber evidence="1">7.2.1.1</ecNumber>
    </recommendedName>
    <alternativeName>
        <fullName evidence="1">NQR complex subunit B</fullName>
    </alternativeName>
    <alternativeName>
        <fullName evidence="1">NQR-1 subunit B</fullName>
    </alternativeName>
</protein>
<sequence>MALKKFLEDIEHHFEPGGKHEKWFALYEAVATVFYTPGLVTKKSSHVRDSVDLKRIMIMVWFAVFPAMFWGMYNAGGQAIAALNHMYAGDQLATVIAGNWHYWLTEMLGGSISADAGVGSKMLLGATYFLPIYATVFLVGGFWEVLFCMVRKHEVNEGFFVTSILFALIVPPTLPLWQAALGITFGVVVAKEIFGGTGRNFLNPALAGRAFLFFAYPAQISGDVVWTAADGFSGATALSQWAHGGSGALINNITGAPITWMDAFIGNIPGSIGEVSTLALMIGAAMIVYMRIASWRIIAGVMIGMIAVSTLFNVVGSDTNPMFNMPWHWHLVLGGFAFGMFFMATDPVSASFTNKGKWWYGILIGAMCVMIRVVNPAYPEGMMLAILFANLFAPLFDHVVIEKNIKRRLARYGK</sequence>
<proteinExistence type="inferred from homology"/>
<accession>Q87MA7</accession>
<comment type="function">
    <text evidence="1">NQR complex catalyzes the reduction of ubiquinone-1 to ubiquinol by two successive reactions, coupled with the transport of Na(+) ions from the cytoplasm to the periplasm. NqrA to NqrE are probably involved in the second step, the conversion of ubisemiquinone to ubiquinol.</text>
</comment>
<comment type="catalytic activity">
    <reaction evidence="1">
        <text>a ubiquinone + n Na(+)(in) + NADH + H(+) = a ubiquinol + n Na(+)(out) + NAD(+)</text>
        <dbReference type="Rhea" id="RHEA:47748"/>
        <dbReference type="Rhea" id="RHEA-COMP:9565"/>
        <dbReference type="Rhea" id="RHEA-COMP:9566"/>
        <dbReference type="ChEBI" id="CHEBI:15378"/>
        <dbReference type="ChEBI" id="CHEBI:16389"/>
        <dbReference type="ChEBI" id="CHEBI:17976"/>
        <dbReference type="ChEBI" id="CHEBI:29101"/>
        <dbReference type="ChEBI" id="CHEBI:57540"/>
        <dbReference type="ChEBI" id="CHEBI:57945"/>
        <dbReference type="EC" id="7.2.1.1"/>
    </reaction>
</comment>
<comment type="cofactor">
    <cofactor evidence="1">
        <name>FMN</name>
        <dbReference type="ChEBI" id="CHEBI:58210"/>
    </cofactor>
</comment>
<comment type="subunit">
    <text evidence="1">Composed of six subunits; NqrA, NqrB, NqrC, NqrD, NqrE and NqrF.</text>
</comment>
<comment type="subcellular location">
    <subcellularLocation>
        <location evidence="1">Cell inner membrane</location>
        <topology evidence="1">Multi-pass membrane protein</topology>
    </subcellularLocation>
</comment>
<comment type="similarity">
    <text evidence="1">Belongs to the NqrB/RnfD family.</text>
</comment>
<evidence type="ECO:0000255" key="1">
    <source>
        <dbReference type="HAMAP-Rule" id="MF_00426"/>
    </source>
</evidence>
<feature type="chain" id="PRO_0000074446" description="Na(+)-translocating NADH-quinone reductase subunit B">
    <location>
        <begin position="1"/>
        <end position="414"/>
    </location>
</feature>
<feature type="transmembrane region" description="Helical" evidence="1">
    <location>
        <begin position="23"/>
        <end position="40"/>
    </location>
</feature>
<feature type="transmembrane region" description="Helical" evidence="1">
    <location>
        <begin position="56"/>
        <end position="76"/>
    </location>
</feature>
<feature type="transmembrane region" description="Helical" evidence="1">
    <location>
        <begin position="129"/>
        <end position="149"/>
    </location>
</feature>
<feature type="transmembrane region" description="Helical" evidence="1">
    <location>
        <begin position="164"/>
        <end position="184"/>
    </location>
</feature>
<feature type="transmembrane region" description="Helical" evidence="1">
    <location>
        <begin position="268"/>
        <end position="288"/>
    </location>
</feature>
<feature type="transmembrane region" description="Helical" evidence="1">
    <location>
        <begin position="297"/>
        <end position="317"/>
    </location>
</feature>
<feature type="transmembrane region" description="Helical" evidence="1">
    <location>
        <begin position="325"/>
        <end position="345"/>
    </location>
</feature>
<feature type="transmembrane region" description="Helical" evidence="1">
    <location>
        <begin position="358"/>
        <end position="378"/>
    </location>
</feature>
<feature type="transmembrane region" description="Helical" evidence="1">
    <location>
        <begin position="381"/>
        <end position="401"/>
    </location>
</feature>
<feature type="modified residue" description="FMN phosphoryl threonine" evidence="1">
    <location>
        <position position="236"/>
    </location>
</feature>
<organism>
    <name type="scientific">Vibrio parahaemolyticus serotype O3:K6 (strain RIMD 2210633)</name>
    <dbReference type="NCBI Taxonomy" id="223926"/>
    <lineage>
        <taxon>Bacteria</taxon>
        <taxon>Pseudomonadati</taxon>
        <taxon>Pseudomonadota</taxon>
        <taxon>Gammaproteobacteria</taxon>
        <taxon>Vibrionales</taxon>
        <taxon>Vibrionaceae</taxon>
        <taxon>Vibrio</taxon>
    </lineage>
</organism>
<name>NQRB_VIBPA</name>